<evidence type="ECO:0000255" key="1">
    <source>
        <dbReference type="HAMAP-Rule" id="MF_00262"/>
    </source>
</evidence>
<comment type="function">
    <text evidence="1">Prevents the cell division inhibition by proteins MinC and MinD at internal division sites while permitting inhibition at polar sites. This ensures cell division at the proper site by restricting the formation of a division septum at the midpoint of the long axis of the cell.</text>
</comment>
<comment type="similarity">
    <text evidence="1">Belongs to the MinE family.</text>
</comment>
<gene>
    <name evidence="1" type="primary">minE</name>
    <name type="ordered locus">Bxeno_A1024</name>
    <name type="ORF">Bxe_A3423</name>
</gene>
<name>MINE_PARXL</name>
<protein>
    <recommendedName>
        <fullName evidence="1">Cell division topological specificity factor</fullName>
    </recommendedName>
</protein>
<proteinExistence type="inferred from homology"/>
<keyword id="KW-0131">Cell cycle</keyword>
<keyword id="KW-0132">Cell division</keyword>
<keyword id="KW-1185">Reference proteome</keyword>
<dbReference type="EMBL" id="CP000270">
    <property type="protein sequence ID" value="ABE29562.1"/>
    <property type="molecule type" value="Genomic_DNA"/>
</dbReference>
<dbReference type="RefSeq" id="WP_007175862.1">
    <property type="nucleotide sequence ID" value="NZ_CP008760.1"/>
</dbReference>
<dbReference type="SMR" id="Q143C7"/>
<dbReference type="STRING" id="266265.Bxe_A3423"/>
<dbReference type="KEGG" id="bxb:DR64_1123"/>
<dbReference type="KEGG" id="bxe:Bxe_A3423"/>
<dbReference type="eggNOG" id="COG0851">
    <property type="taxonomic scope" value="Bacteria"/>
</dbReference>
<dbReference type="OrthoDB" id="9802655at2"/>
<dbReference type="Proteomes" id="UP000001817">
    <property type="component" value="Chromosome 1"/>
</dbReference>
<dbReference type="GO" id="GO:0051301">
    <property type="term" value="P:cell division"/>
    <property type="evidence" value="ECO:0007669"/>
    <property type="project" value="UniProtKB-KW"/>
</dbReference>
<dbReference type="GO" id="GO:0032955">
    <property type="term" value="P:regulation of division septum assembly"/>
    <property type="evidence" value="ECO:0007669"/>
    <property type="project" value="InterPro"/>
</dbReference>
<dbReference type="FunFam" id="3.30.1070.10:FF:000001">
    <property type="entry name" value="Cell division topological specificity factor"/>
    <property type="match status" value="1"/>
</dbReference>
<dbReference type="Gene3D" id="3.30.1070.10">
    <property type="entry name" value="Cell division topological specificity factor MinE"/>
    <property type="match status" value="1"/>
</dbReference>
<dbReference type="HAMAP" id="MF_00262">
    <property type="entry name" value="MinE"/>
    <property type="match status" value="1"/>
</dbReference>
<dbReference type="InterPro" id="IPR005527">
    <property type="entry name" value="MinE"/>
</dbReference>
<dbReference type="InterPro" id="IPR036707">
    <property type="entry name" value="MinE_sf"/>
</dbReference>
<dbReference type="NCBIfam" id="TIGR01215">
    <property type="entry name" value="minE"/>
    <property type="match status" value="1"/>
</dbReference>
<dbReference type="NCBIfam" id="NF001422">
    <property type="entry name" value="PRK00296.1"/>
    <property type="match status" value="1"/>
</dbReference>
<dbReference type="NCBIfam" id="NF010595">
    <property type="entry name" value="PRK13989.1"/>
    <property type="match status" value="1"/>
</dbReference>
<dbReference type="Pfam" id="PF03776">
    <property type="entry name" value="MinE"/>
    <property type="match status" value="1"/>
</dbReference>
<dbReference type="SUPFAM" id="SSF55229">
    <property type="entry name" value="Cell division protein MinE topological specificity domain"/>
    <property type="match status" value="1"/>
</dbReference>
<organism>
    <name type="scientific">Paraburkholderia xenovorans (strain LB400)</name>
    <dbReference type="NCBI Taxonomy" id="266265"/>
    <lineage>
        <taxon>Bacteria</taxon>
        <taxon>Pseudomonadati</taxon>
        <taxon>Pseudomonadota</taxon>
        <taxon>Betaproteobacteria</taxon>
        <taxon>Burkholderiales</taxon>
        <taxon>Burkholderiaceae</taxon>
        <taxon>Paraburkholderia</taxon>
    </lineage>
</organism>
<reference key="1">
    <citation type="journal article" date="2006" name="Proc. Natl. Acad. Sci. U.S.A.">
        <title>Burkholderia xenovorans LB400 harbors a multi-replicon, 9.73-Mbp genome shaped for versatility.</title>
        <authorList>
            <person name="Chain P.S.G."/>
            <person name="Denef V.J."/>
            <person name="Konstantinidis K.T."/>
            <person name="Vergez L.M."/>
            <person name="Agullo L."/>
            <person name="Reyes V.L."/>
            <person name="Hauser L."/>
            <person name="Cordova M."/>
            <person name="Gomez L."/>
            <person name="Gonzalez M."/>
            <person name="Land M."/>
            <person name="Lao V."/>
            <person name="Larimer F."/>
            <person name="LiPuma J.J."/>
            <person name="Mahenthiralingam E."/>
            <person name="Malfatti S.A."/>
            <person name="Marx C.J."/>
            <person name="Parnell J.J."/>
            <person name="Ramette A."/>
            <person name="Richardson P."/>
            <person name="Seeger M."/>
            <person name="Smith D."/>
            <person name="Spilker T."/>
            <person name="Sul W.J."/>
            <person name="Tsoi T.V."/>
            <person name="Ulrich L.E."/>
            <person name="Zhulin I.B."/>
            <person name="Tiedje J.M."/>
        </authorList>
    </citation>
    <scope>NUCLEOTIDE SEQUENCE [LARGE SCALE GENOMIC DNA]</scope>
    <source>
        <strain>LB400</strain>
    </source>
</reference>
<feature type="chain" id="PRO_0000298095" description="Cell division topological specificity factor">
    <location>
        <begin position="1"/>
        <end position="84"/>
    </location>
</feature>
<accession>Q143C7</accession>
<sequence>MSILSFLLGEKKKSASVAKERLQLIIAHERAGGHAPADYLPALQRELVAVISKYVKISHEDIRVSLERQDDLEVLEVKIEIPQA</sequence>